<evidence type="ECO:0000250" key="1">
    <source>
        <dbReference type="UniProtKB" id="A6NC51"/>
    </source>
</evidence>
<evidence type="ECO:0000250" key="2">
    <source>
        <dbReference type="UniProtKB" id="Q86TG1"/>
    </source>
</evidence>
<evidence type="ECO:0000255" key="3"/>
<evidence type="ECO:0000305" key="4"/>
<comment type="function">
    <text evidence="1">Modulator of macroautophagy that causes accumulation of autophagosomes under basal conditions and enhances autophagic flux (By similarity). Represses cell death and promotes long-term clonogenic survival of cells grown in the absence of glucose in a macroautophagy-independent manner (By similarity). May have some role in extracellular matrix engulfment or growth factor receptor recycling, both of which can modulate cell survival (By similarity).</text>
</comment>
<comment type="subcellular location">
    <subcellularLocation>
        <location evidence="1">Cell membrane</location>
        <topology evidence="1">Multi-pass membrane protein</topology>
    </subcellularLocation>
    <subcellularLocation>
        <location evidence="1">Endosome membrane</location>
        <topology evidence="3">Multi-pass membrane protein</topology>
    </subcellularLocation>
    <subcellularLocation>
        <location evidence="1">Cytoplasmic vesicle</location>
        <location evidence="1">Autophagosome membrane</location>
        <topology evidence="3">Multi-pass membrane protein</topology>
    </subcellularLocation>
</comment>
<comment type="similarity">
    <text evidence="4">Belongs to the DRAM/TMEM150 family.</text>
</comment>
<dbReference type="EMBL" id="BC097726">
    <property type="protein sequence ID" value="AAH97726.1"/>
    <property type="molecule type" value="mRNA"/>
</dbReference>
<dbReference type="RefSeq" id="NP_001089493.1">
    <property type="nucleotide sequence ID" value="NM_001096024.2"/>
</dbReference>
<dbReference type="GlyCosmos" id="Q4V7T7">
    <property type="glycosylation" value="2 sites, No reported glycans"/>
</dbReference>
<dbReference type="DNASU" id="734545"/>
<dbReference type="GeneID" id="734545"/>
<dbReference type="KEGG" id="xla:734545"/>
<dbReference type="AGR" id="Xenbase:XB-GENE-5873625"/>
<dbReference type="CTD" id="734545"/>
<dbReference type="Xenbase" id="XB-GENE-5873625">
    <property type="gene designation" value="tmem150b.S"/>
</dbReference>
<dbReference type="OMA" id="IRYHQLR"/>
<dbReference type="OrthoDB" id="191706at2759"/>
<dbReference type="Proteomes" id="UP000186698">
    <property type="component" value="Chromosome 7S"/>
</dbReference>
<dbReference type="Bgee" id="734545">
    <property type="expression patterns" value="Expressed in gastrula and 3 other cell types or tissues"/>
</dbReference>
<dbReference type="GO" id="GO:0000421">
    <property type="term" value="C:autophagosome membrane"/>
    <property type="evidence" value="ECO:0007669"/>
    <property type="project" value="UniProtKB-SubCell"/>
</dbReference>
<dbReference type="GO" id="GO:0010008">
    <property type="term" value="C:endosome membrane"/>
    <property type="evidence" value="ECO:0007669"/>
    <property type="project" value="UniProtKB-SubCell"/>
</dbReference>
<dbReference type="GO" id="GO:0005886">
    <property type="term" value="C:plasma membrane"/>
    <property type="evidence" value="ECO:0000250"/>
    <property type="project" value="UniProtKB"/>
</dbReference>
<dbReference type="GO" id="GO:0006914">
    <property type="term" value="P:autophagy"/>
    <property type="evidence" value="ECO:0007669"/>
    <property type="project" value="UniProtKB-KW"/>
</dbReference>
<dbReference type="InterPro" id="IPR050911">
    <property type="entry name" value="DRAM/TMEM150_Autophagy_Mod"/>
</dbReference>
<dbReference type="InterPro" id="IPR019402">
    <property type="entry name" value="Frag1/DRAM/Sfk1"/>
</dbReference>
<dbReference type="PANTHER" id="PTHR21324">
    <property type="entry name" value="FASTING-INDUCIBLE INTEGRAL MEMBRANE PROTEIN TM6P1-RELATED"/>
    <property type="match status" value="1"/>
</dbReference>
<dbReference type="PANTHER" id="PTHR21324:SF3">
    <property type="entry name" value="MODULATOR OF MACROAUTOPHAGY TMEM150B"/>
    <property type="match status" value="1"/>
</dbReference>
<dbReference type="Pfam" id="PF10277">
    <property type="entry name" value="Frag1"/>
    <property type="match status" value="1"/>
</dbReference>
<feature type="chain" id="PRO_0000349287" description="Modulator of macroautophagy TMEM150B-A">
    <location>
        <begin position="1"/>
        <end position="230"/>
    </location>
</feature>
<feature type="topological domain" description="Cytoplasmic" evidence="4">
    <location>
        <position position="1"/>
    </location>
</feature>
<feature type="transmembrane region" description="Helical" evidence="3">
    <location>
        <begin position="2"/>
        <end position="22"/>
    </location>
</feature>
<feature type="topological domain" description="Extracellular" evidence="4">
    <location>
        <begin position="23"/>
        <end position="50"/>
    </location>
</feature>
<feature type="transmembrane region" description="Helical" evidence="3">
    <location>
        <begin position="51"/>
        <end position="71"/>
    </location>
</feature>
<feature type="topological domain" description="Cytoplasmic" evidence="4">
    <location>
        <begin position="72"/>
        <end position="83"/>
    </location>
</feature>
<feature type="transmembrane region" description="Helical" evidence="3">
    <location>
        <begin position="84"/>
        <end position="104"/>
    </location>
</feature>
<feature type="topological domain" description="Extracellular" evidence="4">
    <location>
        <begin position="105"/>
        <end position="115"/>
    </location>
</feature>
<feature type="transmembrane region" description="Helical" evidence="3">
    <location>
        <begin position="116"/>
        <end position="136"/>
    </location>
</feature>
<feature type="topological domain" description="Cytoplasmic" evidence="4">
    <location>
        <begin position="137"/>
        <end position="150"/>
    </location>
</feature>
<feature type="transmembrane region" description="Helical" evidence="3">
    <location>
        <begin position="151"/>
        <end position="171"/>
    </location>
</feature>
<feature type="topological domain" description="Extracellular" evidence="4">
    <location>
        <begin position="172"/>
        <end position="183"/>
    </location>
</feature>
<feature type="transmembrane region" description="Helical" evidence="3">
    <location>
        <begin position="184"/>
        <end position="204"/>
    </location>
</feature>
<feature type="topological domain" description="Cytoplasmic" evidence="2">
    <location>
        <begin position="205"/>
        <end position="230"/>
    </location>
</feature>
<feature type="glycosylation site" description="N-linked (GlcNAc...) asparagine" evidence="3">
    <location>
        <position position="29"/>
    </location>
</feature>
<feature type="glycosylation site" description="N-linked (GlcNAc...) asparagine" evidence="3">
    <location>
        <position position="33"/>
    </location>
</feature>
<proteinExistence type="evidence at transcript level"/>
<accession>Q4V7T7</accession>
<protein>
    <recommendedName>
        <fullName evidence="4">Modulator of macroautophagy TMEM150B-A</fullName>
    </recommendedName>
    <alternativeName>
        <fullName evidence="1">Transmembrane protein 150B-A</fullName>
    </alternativeName>
</protein>
<gene>
    <name evidence="1" type="primary">tmem150b-a</name>
</gene>
<organism>
    <name type="scientific">Xenopus laevis</name>
    <name type="common">African clawed frog</name>
    <dbReference type="NCBI Taxonomy" id="8355"/>
    <lineage>
        <taxon>Eukaryota</taxon>
        <taxon>Metazoa</taxon>
        <taxon>Chordata</taxon>
        <taxon>Craniata</taxon>
        <taxon>Vertebrata</taxon>
        <taxon>Euteleostomi</taxon>
        <taxon>Amphibia</taxon>
        <taxon>Batrachia</taxon>
        <taxon>Anura</taxon>
        <taxon>Pipoidea</taxon>
        <taxon>Pipidae</taxon>
        <taxon>Xenopodinae</taxon>
        <taxon>Xenopus</taxon>
        <taxon>Xenopus</taxon>
    </lineage>
</organism>
<name>T15BA_XENLA</name>
<keyword id="KW-0072">Autophagy</keyword>
<keyword id="KW-1003">Cell membrane</keyword>
<keyword id="KW-0968">Cytoplasmic vesicle</keyword>
<keyword id="KW-0967">Endosome</keyword>
<keyword id="KW-0325">Glycoprotein</keyword>
<keyword id="KW-0472">Membrane</keyword>
<keyword id="KW-1185">Reference proteome</keyword>
<keyword id="KW-0812">Transmembrane</keyword>
<keyword id="KW-1133">Transmembrane helix</keyword>
<reference key="1">
    <citation type="submission" date="2005-06" db="EMBL/GenBank/DDBJ databases">
        <authorList>
            <consortium name="NIH - Xenopus Gene Collection (XGC) project"/>
        </authorList>
    </citation>
    <scope>NUCLEOTIDE SEQUENCE [LARGE SCALE MRNA]</scope>
    <source>
        <tissue>Embryo</tissue>
    </source>
</reference>
<sequence length="230" mass="25410">MWAWALLPICLTIWATAGIWIVYGMSVSNGSVNLSDGFPYISLCGTDPPQSCVFGQVLNVGAMLGVWISAIRFQQIRDYNCHSVLNSVSLAMGILCALGTSIVGNFQQSNQLETHLAGAFLAFVIGNIYFWMQTALTYMVKPTHGGCYIGPIRFCLSVACTALIVLMAVFLKMNMKSISAICEWIVAMILFLLYGLFAVDFWHLDGHYFHVKKRTVIPNEMQVSTVTLSI</sequence>